<organism>
    <name type="scientific">Pongo abelii</name>
    <name type="common">Sumatran orangutan</name>
    <name type="synonym">Pongo pygmaeus abelii</name>
    <dbReference type="NCBI Taxonomy" id="9601"/>
    <lineage>
        <taxon>Eukaryota</taxon>
        <taxon>Metazoa</taxon>
        <taxon>Chordata</taxon>
        <taxon>Craniata</taxon>
        <taxon>Vertebrata</taxon>
        <taxon>Euteleostomi</taxon>
        <taxon>Mammalia</taxon>
        <taxon>Eutheria</taxon>
        <taxon>Euarchontoglires</taxon>
        <taxon>Primates</taxon>
        <taxon>Haplorrhini</taxon>
        <taxon>Catarrhini</taxon>
        <taxon>Hominidae</taxon>
        <taxon>Pongo</taxon>
    </lineage>
</organism>
<dbReference type="EMBL" id="CR858839">
    <property type="protein sequence ID" value="CAH91041.1"/>
    <property type="molecule type" value="mRNA"/>
</dbReference>
<dbReference type="RefSeq" id="NP_001125603.1">
    <property type="nucleotide sequence ID" value="NM_001132131.1"/>
</dbReference>
<dbReference type="SMR" id="Q5RB19"/>
<dbReference type="STRING" id="9601.ENSPPYP00000004803"/>
<dbReference type="GeneID" id="100172520"/>
<dbReference type="KEGG" id="pon:100172520"/>
<dbReference type="CTD" id="11331"/>
<dbReference type="eggNOG" id="KOG3090">
    <property type="taxonomic scope" value="Eukaryota"/>
</dbReference>
<dbReference type="InParanoid" id="Q5RB19"/>
<dbReference type="OrthoDB" id="275637at2759"/>
<dbReference type="Proteomes" id="UP000001595">
    <property type="component" value="Unplaced"/>
</dbReference>
<dbReference type="GO" id="GO:0009986">
    <property type="term" value="C:cell surface"/>
    <property type="evidence" value="ECO:0000250"/>
    <property type="project" value="UniProtKB"/>
</dbReference>
<dbReference type="GO" id="GO:0005737">
    <property type="term" value="C:cytoplasm"/>
    <property type="evidence" value="ECO:0000250"/>
    <property type="project" value="UniProtKB"/>
</dbReference>
<dbReference type="GO" id="GO:0098800">
    <property type="term" value="C:inner mitochondrial membrane protein complex"/>
    <property type="evidence" value="ECO:0000250"/>
    <property type="project" value="UniProtKB"/>
</dbReference>
<dbReference type="GO" id="GO:0005743">
    <property type="term" value="C:mitochondrial inner membrane"/>
    <property type="evidence" value="ECO:0000250"/>
    <property type="project" value="UniProtKB"/>
</dbReference>
<dbReference type="GO" id="GO:0035632">
    <property type="term" value="C:mitochondrial prohibitin complex"/>
    <property type="evidence" value="ECO:0000250"/>
    <property type="project" value="UniProtKB"/>
</dbReference>
<dbReference type="GO" id="GO:0016363">
    <property type="term" value="C:nuclear matrix"/>
    <property type="evidence" value="ECO:0000250"/>
    <property type="project" value="UniProtKB"/>
</dbReference>
<dbReference type="GO" id="GO:0005634">
    <property type="term" value="C:nucleus"/>
    <property type="evidence" value="ECO:0000250"/>
    <property type="project" value="UniProtKB"/>
</dbReference>
<dbReference type="GO" id="GO:0005886">
    <property type="term" value="C:plasma membrane"/>
    <property type="evidence" value="ECO:0000250"/>
    <property type="project" value="UniProtKB"/>
</dbReference>
<dbReference type="GO" id="GO:0032991">
    <property type="term" value="C:protein-containing complex"/>
    <property type="evidence" value="ECO:0000250"/>
    <property type="project" value="UniProtKB"/>
</dbReference>
<dbReference type="GO" id="GO:0042803">
    <property type="term" value="F:protein homodimerization activity"/>
    <property type="evidence" value="ECO:0000250"/>
    <property type="project" value="UniProtKB"/>
</dbReference>
<dbReference type="GO" id="GO:0046625">
    <property type="term" value="F:sphingolipid binding"/>
    <property type="evidence" value="ECO:0000250"/>
    <property type="project" value="UniProtKB"/>
</dbReference>
<dbReference type="GO" id="GO:0042113">
    <property type="term" value="P:B cell activation"/>
    <property type="evidence" value="ECO:0000250"/>
    <property type="project" value="UniProtKB"/>
</dbReference>
<dbReference type="GO" id="GO:0016477">
    <property type="term" value="P:cell migration"/>
    <property type="evidence" value="ECO:0000250"/>
    <property type="project" value="UniProtKB"/>
</dbReference>
<dbReference type="GO" id="GO:0007005">
    <property type="term" value="P:mitochondrion organization"/>
    <property type="evidence" value="ECO:0007669"/>
    <property type="project" value="TreeGrafter"/>
</dbReference>
<dbReference type="GO" id="GO:0000423">
    <property type="term" value="P:mitophagy"/>
    <property type="evidence" value="ECO:0000250"/>
    <property type="project" value="UniProtKB"/>
</dbReference>
<dbReference type="GO" id="GO:0002639">
    <property type="term" value="P:positive regulation of immunoglobulin production"/>
    <property type="evidence" value="ECO:0000250"/>
    <property type="project" value="UniProtKB"/>
</dbReference>
<dbReference type="GO" id="GO:1901224">
    <property type="term" value="P:positive regulation of non-canonical NF-kappaB signal transduction"/>
    <property type="evidence" value="ECO:0000250"/>
    <property type="project" value="UniProtKB"/>
</dbReference>
<dbReference type="GO" id="GO:1900208">
    <property type="term" value="P:regulation of cardiolipin metabolic process"/>
    <property type="evidence" value="ECO:0000250"/>
    <property type="project" value="UniProtKB"/>
</dbReference>
<dbReference type="GO" id="GO:1904959">
    <property type="term" value="P:regulation of cytochrome-c oxidase activity"/>
    <property type="evidence" value="ECO:0000250"/>
    <property type="project" value="UniProtKB"/>
</dbReference>
<dbReference type="CDD" id="cd03401">
    <property type="entry name" value="SPFH_prohibitin"/>
    <property type="match status" value="1"/>
</dbReference>
<dbReference type="FunFam" id="3.30.479.30:FF:000001">
    <property type="entry name" value="Prohibitin 2"/>
    <property type="match status" value="1"/>
</dbReference>
<dbReference type="Gene3D" id="3.30.479.30">
    <property type="entry name" value="Band 7 domain"/>
    <property type="match status" value="1"/>
</dbReference>
<dbReference type="InterPro" id="IPR001107">
    <property type="entry name" value="Band_7"/>
</dbReference>
<dbReference type="InterPro" id="IPR036013">
    <property type="entry name" value="Band_7/SPFH_dom_sf"/>
</dbReference>
<dbReference type="InterPro" id="IPR000163">
    <property type="entry name" value="Prohibitin"/>
</dbReference>
<dbReference type="PANTHER" id="PTHR23222">
    <property type="entry name" value="PROHIBITIN"/>
    <property type="match status" value="1"/>
</dbReference>
<dbReference type="PANTHER" id="PTHR23222:SF1">
    <property type="entry name" value="PROHIBITIN-2"/>
    <property type="match status" value="1"/>
</dbReference>
<dbReference type="Pfam" id="PF01145">
    <property type="entry name" value="Band_7"/>
    <property type="match status" value="1"/>
</dbReference>
<dbReference type="PRINTS" id="PR00679">
    <property type="entry name" value="PROHIBITIN"/>
</dbReference>
<dbReference type="SMART" id="SM00244">
    <property type="entry name" value="PHB"/>
    <property type="match status" value="1"/>
</dbReference>
<dbReference type="SUPFAM" id="SSF117892">
    <property type="entry name" value="Band 7/SPFH domain"/>
    <property type="match status" value="1"/>
</dbReference>
<gene>
    <name type="primary">PHB2</name>
</gene>
<reference key="1">
    <citation type="submission" date="2004-11" db="EMBL/GenBank/DDBJ databases">
        <authorList>
            <consortium name="The German cDNA consortium"/>
        </authorList>
    </citation>
    <scope>NUCLEOTIDE SEQUENCE [LARGE SCALE MRNA]</scope>
    <source>
        <tissue>Kidney</tissue>
    </source>
</reference>
<protein>
    <recommendedName>
        <fullName>Prohibitin-2</fullName>
    </recommendedName>
</protein>
<name>PHB2_PONAB</name>
<evidence type="ECO:0000250" key="1"/>
<evidence type="ECO:0000250" key="2">
    <source>
        <dbReference type="UniProtKB" id="O35129"/>
    </source>
</evidence>
<evidence type="ECO:0000250" key="3">
    <source>
        <dbReference type="UniProtKB" id="Q99623"/>
    </source>
</evidence>
<evidence type="ECO:0000255" key="4"/>
<evidence type="ECO:0000305" key="5"/>
<feature type="initiator methionine" description="Removed" evidence="3">
    <location>
        <position position="1"/>
    </location>
</feature>
<feature type="chain" id="PRO_0000328652" description="Prohibitin-2">
    <location>
        <begin position="2"/>
        <end position="299"/>
    </location>
</feature>
<feature type="region of interest" description="Necessary for transcriptional repression" evidence="1">
    <location>
        <begin position="19"/>
        <end position="49"/>
    </location>
</feature>
<feature type="region of interest" description="Necessary for transcriptional repression" evidence="1">
    <location>
        <begin position="150"/>
        <end position="174"/>
    </location>
</feature>
<feature type="coiled-coil region" evidence="4">
    <location>
        <begin position="190"/>
        <end position="238"/>
    </location>
</feature>
<feature type="modified residue" description="N-acetylalanine" evidence="3">
    <location>
        <position position="2"/>
    </location>
</feature>
<feature type="modified residue" description="Phosphotyrosine" evidence="3">
    <location>
        <position position="128"/>
    </location>
</feature>
<feature type="modified residue" description="N6-acetyllysine" evidence="2">
    <location>
        <position position="147"/>
    </location>
</feature>
<feature type="modified residue" description="Phosphoserine" evidence="3">
    <location>
        <position position="151"/>
    </location>
</feature>
<feature type="modified residue" description="N6-acetyllysine" evidence="2">
    <location>
        <position position="200"/>
    </location>
</feature>
<feature type="modified residue" description="N6-acetyllysine" evidence="2">
    <location>
        <position position="236"/>
    </location>
</feature>
<feature type="modified residue" description="N6-acetyllysine" evidence="3">
    <location>
        <position position="250"/>
    </location>
</feature>
<feature type="modified residue" description="N6-acetyllysine" evidence="2">
    <location>
        <position position="262"/>
    </location>
</feature>
<sequence>MAQNLKDLAGRLPAGPRGMGTALKLLLGAGAVAYGVRESVFTVEGGHRAIFFNRIGGVQQDTILAEGLHFRIPWFQYPIIYDIRARPRKISSPTGSKDLQMVNISLRVLSRPNAQELPSMYQRLGLDYEERVLPSIVNEVLKSVVAKFNASQLITQRAQVSLLIRRELTERAKDFSLILDDVAITELSFSREYTAAVEAKQVAQQEAQRAQFLVEKAKQEQRQKIVQAEGEAEAAKMLGEALSKNPGYIKLRKIRAAQNISKTIATSQNRIYPTADNLVLNLQDESFTRGSDSLIKGKK</sequence>
<accession>Q5RB19</accession>
<comment type="function">
    <text evidence="2">Protein with pleiotropic attributes mediated in a cell-compartment- and tissue-specific manner, which include the plasma membrane-associated cell signaling functions, mitochondrial chaperone, and transcriptional co-regulator of transcription factors and sex steroid hormones in the nucleus.</text>
</comment>
<comment type="function">
    <text evidence="2">In the mitochondria, together with PHB, forms large ring complexes (prohibitin complexes) in the inner mitochondrial membrane (IMM) and functions as a chaperone protein that stabilizes mitochondrial respiratory enzymes and maintains mitochondrial integrity in the IMM, which is required for mitochondrial morphogenesis, neuronal survival, and normal lifespan. The prohibitin complex, with DNAJC19, regulates cardiolipin remodeling and the protein turnover of OMA1 in a cardiolipin-binding manner. Also regulates cytochrome-c oxidase assembly (COX) and mitochondrial respiration. Binding to sphingoid 1-phosphate (SPP) modulates its regulator activity. Has a key role of mitophagy receptor involved in targeting mitochondria for autophagic degradation. Involved in mitochondrial-mediated antiviral innate immunity, activates RIG-I-mediated signal transduction and production of IFNB1 and pro-inflammatory cytokine IL6.</text>
</comment>
<comment type="function">
    <text evidence="2">In the nucleus, serves as transcriptional co-regulator. Acts as a mediator of transcriptional repression by nuclear hormone receptors via recruitment of histone deacetylases. Functions as an estrogen receptor (ER)-selective coregulator that potentiates the inhibitory activities of antiestrogens and represses the activity of estrogens. Competes with NCOA1 for modulation of ER transcriptional activity.</text>
</comment>
<comment type="function">
    <text evidence="2 3">In the plasma membrane, is involved in IGFBP6-induced cell migration (By similarity). Cooperates with CD86 to mediate CD86-signaling in B lymphocytes that regulates the level of IgG1 produced through the activation of distal signaling intermediates. Upon CD40 engagement, required to activate NF-kappa-B signaling pathway via phospholipase C and protein kinase C activation (By similarity).</text>
</comment>
<comment type="subunit">
    <text evidence="2 3">The mitochondrial prohibitin complex consists of two subunits (PHB1 and PHB2), assembled into a membrane-associated ring-shaped supercomplex of approximately 1 mDa. Interacts with ESR1, HDAC1 and HDAC5 (By similarity). Interacts with ZNF703. Interacts with STOML2. Interacts with ARFGEF3 (By similarity). Interacts with SPHK2. Interacts with COX4I1; the interaction associates PHB2 with COX (By similarity). Interacts with MAP1LC3B (membrane-bound form LC3-II); the interaction is direct and upon mitochondrial depolarization and proteasome-dependent outer membrane rupture. Interacts with IGFBP6 (via C-terminal domain). Interacts with CLPB (By similarity). Interacts with CD86 (via cytoplasmic domain); the interactions increases after priming with CD40. Interacts with AFG3L2. Interacts with DNAJC19 (By similarity). Interacts with AKT2; this interaction may be important for myogenic differentiation (By similarity).</text>
</comment>
<comment type="subcellular location">
    <subcellularLocation>
        <location evidence="2">Mitochondrion inner membrane</location>
    </subcellularLocation>
    <subcellularLocation>
        <location evidence="2">Cytoplasm</location>
    </subcellularLocation>
    <subcellularLocation>
        <location evidence="2">Nucleus</location>
    </subcellularLocation>
    <subcellularLocation>
        <location evidence="3">Cell membrane</location>
    </subcellularLocation>
</comment>
<comment type="domain">
    <text evidence="3">LC3-interaction region (LIR) is required for interaction with MAP1LC3B/LC3-II and for Parkin-mediated mitophagy.</text>
</comment>
<comment type="PTM">
    <text evidence="3">Phosphorylated. Tyrosine phosphorylation is indirectly stimulated by IGFBP6.</text>
</comment>
<comment type="similarity">
    <text evidence="5">Belongs to the prohibitin family.</text>
</comment>
<keyword id="KW-0007">Acetylation</keyword>
<keyword id="KW-1003">Cell membrane</keyword>
<keyword id="KW-0175">Coiled coil</keyword>
<keyword id="KW-0963">Cytoplasm</keyword>
<keyword id="KW-0472">Membrane</keyword>
<keyword id="KW-0496">Mitochondrion</keyword>
<keyword id="KW-0999">Mitochondrion inner membrane</keyword>
<keyword id="KW-0539">Nucleus</keyword>
<keyword id="KW-0597">Phosphoprotein</keyword>
<keyword id="KW-0675">Receptor</keyword>
<keyword id="KW-1185">Reference proteome</keyword>
<keyword id="KW-0678">Repressor</keyword>
<keyword id="KW-0804">Transcription</keyword>
<keyword id="KW-0805">Transcription regulation</keyword>
<proteinExistence type="evidence at transcript level"/>